<proteinExistence type="inferred from homology"/>
<comment type="function">
    <text evidence="1">IGPS catalyzes the conversion of PRFAR and glutamine to IGP, AICAR and glutamate. The HisH subunit catalyzes the hydrolysis of glutamine to glutamate and ammonia as part of the synthesis of IGP and AICAR. The resulting ammonia molecule is channeled to the active site of HisF.</text>
</comment>
<comment type="catalytic activity">
    <reaction evidence="1">
        <text>5-[(5-phospho-1-deoxy-D-ribulos-1-ylimino)methylamino]-1-(5-phospho-beta-D-ribosyl)imidazole-4-carboxamide + L-glutamine = D-erythro-1-(imidazol-4-yl)glycerol 3-phosphate + 5-amino-1-(5-phospho-beta-D-ribosyl)imidazole-4-carboxamide + L-glutamate + H(+)</text>
        <dbReference type="Rhea" id="RHEA:24793"/>
        <dbReference type="ChEBI" id="CHEBI:15378"/>
        <dbReference type="ChEBI" id="CHEBI:29985"/>
        <dbReference type="ChEBI" id="CHEBI:58278"/>
        <dbReference type="ChEBI" id="CHEBI:58359"/>
        <dbReference type="ChEBI" id="CHEBI:58475"/>
        <dbReference type="ChEBI" id="CHEBI:58525"/>
        <dbReference type="EC" id="4.3.2.10"/>
    </reaction>
</comment>
<comment type="catalytic activity">
    <reaction evidence="1">
        <text>L-glutamine + H2O = L-glutamate + NH4(+)</text>
        <dbReference type="Rhea" id="RHEA:15889"/>
        <dbReference type="ChEBI" id="CHEBI:15377"/>
        <dbReference type="ChEBI" id="CHEBI:28938"/>
        <dbReference type="ChEBI" id="CHEBI:29985"/>
        <dbReference type="ChEBI" id="CHEBI:58359"/>
        <dbReference type="EC" id="3.5.1.2"/>
    </reaction>
</comment>
<comment type="pathway">
    <text evidence="1">Amino-acid biosynthesis; L-histidine biosynthesis; L-histidine from 5-phospho-alpha-D-ribose 1-diphosphate: step 5/9.</text>
</comment>
<comment type="subunit">
    <text evidence="1">Heterodimer of HisH and HisF.</text>
</comment>
<comment type="subcellular location">
    <subcellularLocation>
        <location evidence="1">Cytoplasm</location>
    </subcellularLocation>
</comment>
<reference key="1">
    <citation type="journal article" date="2003" name="Proc. Natl. Acad. Sci. U.S.A.">
        <title>Genome sequence of the cyanobacterium Prochlorococcus marinus SS120, a nearly minimal oxyphototrophic genome.</title>
        <authorList>
            <person name="Dufresne A."/>
            <person name="Salanoubat M."/>
            <person name="Partensky F."/>
            <person name="Artiguenave F."/>
            <person name="Axmann I.M."/>
            <person name="Barbe V."/>
            <person name="Duprat S."/>
            <person name="Galperin M.Y."/>
            <person name="Koonin E.V."/>
            <person name="Le Gall F."/>
            <person name="Makarova K.S."/>
            <person name="Ostrowski M."/>
            <person name="Oztas S."/>
            <person name="Robert C."/>
            <person name="Rogozin I.B."/>
            <person name="Scanlan D.J."/>
            <person name="Tandeau de Marsac N."/>
            <person name="Weissenbach J."/>
            <person name="Wincker P."/>
            <person name="Wolf Y.I."/>
            <person name="Hess W.R."/>
        </authorList>
    </citation>
    <scope>NUCLEOTIDE SEQUENCE [LARGE SCALE GENOMIC DNA]</scope>
    <source>
        <strain>SARG / CCMP1375 / SS120</strain>
    </source>
</reference>
<sequence length="213" mass="23795">MILNIGLIDYGMGNLHSVEQSFKRLNQSLKIISGPNDLSNCDALILPGVGSFDPAMKNLQQTNLIPELKKWVLNNKPLLGICLGLQLLFESSDEGKSKGLGLLKGTIKHLPKSEKQLIPHMGWAELNQDKECPLFKSNSSPQWMYFVHSYSAIPSDKNDIASSVNFGDEKITAVVWKKKLAACQFHPEKSGRSGELLLSNWLAWLKKETKDLY</sequence>
<dbReference type="EC" id="4.3.2.10" evidence="1"/>
<dbReference type="EC" id="3.5.1.2" evidence="1"/>
<dbReference type="EMBL" id="AE017126">
    <property type="protein sequence ID" value="AAQ00185.1"/>
    <property type="molecule type" value="Genomic_DNA"/>
</dbReference>
<dbReference type="RefSeq" id="NP_875532.1">
    <property type="nucleotide sequence ID" value="NC_005042.1"/>
</dbReference>
<dbReference type="RefSeq" id="WP_011125292.1">
    <property type="nucleotide sequence ID" value="NC_005042.1"/>
</dbReference>
<dbReference type="SMR" id="Q7VBF5"/>
<dbReference type="STRING" id="167539.Pro_1140"/>
<dbReference type="EnsemblBacteria" id="AAQ00185">
    <property type="protein sequence ID" value="AAQ00185"/>
    <property type="gene ID" value="Pro_1140"/>
</dbReference>
<dbReference type="KEGG" id="pma:Pro_1140"/>
<dbReference type="PATRIC" id="fig|167539.5.peg.1193"/>
<dbReference type="eggNOG" id="COG0118">
    <property type="taxonomic scope" value="Bacteria"/>
</dbReference>
<dbReference type="HOGENOM" id="CLU_071837_2_2_3"/>
<dbReference type="OrthoDB" id="9807137at2"/>
<dbReference type="UniPathway" id="UPA00031">
    <property type="reaction ID" value="UER00010"/>
</dbReference>
<dbReference type="Proteomes" id="UP000001420">
    <property type="component" value="Chromosome"/>
</dbReference>
<dbReference type="GO" id="GO:0005737">
    <property type="term" value="C:cytoplasm"/>
    <property type="evidence" value="ECO:0007669"/>
    <property type="project" value="UniProtKB-SubCell"/>
</dbReference>
<dbReference type="GO" id="GO:0004359">
    <property type="term" value="F:glutaminase activity"/>
    <property type="evidence" value="ECO:0007669"/>
    <property type="project" value="UniProtKB-EC"/>
</dbReference>
<dbReference type="GO" id="GO:0000107">
    <property type="term" value="F:imidazoleglycerol-phosphate synthase activity"/>
    <property type="evidence" value="ECO:0007669"/>
    <property type="project" value="UniProtKB-UniRule"/>
</dbReference>
<dbReference type="GO" id="GO:0016829">
    <property type="term" value="F:lyase activity"/>
    <property type="evidence" value="ECO:0007669"/>
    <property type="project" value="UniProtKB-KW"/>
</dbReference>
<dbReference type="GO" id="GO:0000105">
    <property type="term" value="P:L-histidine biosynthetic process"/>
    <property type="evidence" value="ECO:0007669"/>
    <property type="project" value="UniProtKB-UniRule"/>
</dbReference>
<dbReference type="CDD" id="cd01748">
    <property type="entry name" value="GATase1_IGP_Synthase"/>
    <property type="match status" value="1"/>
</dbReference>
<dbReference type="Gene3D" id="3.40.50.880">
    <property type="match status" value="1"/>
</dbReference>
<dbReference type="HAMAP" id="MF_00278">
    <property type="entry name" value="HisH"/>
    <property type="match status" value="1"/>
</dbReference>
<dbReference type="InterPro" id="IPR029062">
    <property type="entry name" value="Class_I_gatase-like"/>
</dbReference>
<dbReference type="InterPro" id="IPR017926">
    <property type="entry name" value="GATASE"/>
</dbReference>
<dbReference type="InterPro" id="IPR010139">
    <property type="entry name" value="Imidazole-glycPsynth_HisH"/>
</dbReference>
<dbReference type="NCBIfam" id="TIGR01855">
    <property type="entry name" value="IMP_synth_hisH"/>
    <property type="match status" value="1"/>
</dbReference>
<dbReference type="PANTHER" id="PTHR42701">
    <property type="entry name" value="IMIDAZOLE GLYCEROL PHOSPHATE SYNTHASE SUBUNIT HISH"/>
    <property type="match status" value="1"/>
</dbReference>
<dbReference type="PANTHER" id="PTHR42701:SF1">
    <property type="entry name" value="IMIDAZOLE GLYCEROL PHOSPHATE SYNTHASE SUBUNIT HISH"/>
    <property type="match status" value="1"/>
</dbReference>
<dbReference type="Pfam" id="PF00117">
    <property type="entry name" value="GATase"/>
    <property type="match status" value="1"/>
</dbReference>
<dbReference type="PIRSF" id="PIRSF000495">
    <property type="entry name" value="Amidotransf_hisH"/>
    <property type="match status" value="1"/>
</dbReference>
<dbReference type="SUPFAM" id="SSF52317">
    <property type="entry name" value="Class I glutamine amidotransferase-like"/>
    <property type="match status" value="1"/>
</dbReference>
<dbReference type="PROSITE" id="PS51273">
    <property type="entry name" value="GATASE_TYPE_1"/>
    <property type="match status" value="1"/>
</dbReference>
<accession>Q7VBF5</accession>
<feature type="chain" id="PRO_0000152404" description="Imidazole glycerol phosphate synthase subunit HisH">
    <location>
        <begin position="1"/>
        <end position="213"/>
    </location>
</feature>
<feature type="domain" description="Glutamine amidotransferase type-1" evidence="1">
    <location>
        <begin position="4"/>
        <end position="211"/>
    </location>
</feature>
<feature type="active site" description="Nucleophile" evidence="1">
    <location>
        <position position="82"/>
    </location>
</feature>
<feature type="active site" evidence="1">
    <location>
        <position position="186"/>
    </location>
</feature>
<feature type="active site" evidence="1">
    <location>
        <position position="188"/>
    </location>
</feature>
<keyword id="KW-0028">Amino-acid biosynthesis</keyword>
<keyword id="KW-0963">Cytoplasm</keyword>
<keyword id="KW-0315">Glutamine amidotransferase</keyword>
<keyword id="KW-0368">Histidine biosynthesis</keyword>
<keyword id="KW-0378">Hydrolase</keyword>
<keyword id="KW-0456">Lyase</keyword>
<keyword id="KW-1185">Reference proteome</keyword>
<gene>
    <name evidence="1" type="primary">hisH</name>
    <name type="ordered locus">Pro_1140</name>
</gene>
<evidence type="ECO:0000255" key="1">
    <source>
        <dbReference type="HAMAP-Rule" id="MF_00278"/>
    </source>
</evidence>
<organism>
    <name type="scientific">Prochlorococcus marinus (strain SARG / CCMP1375 / SS120)</name>
    <dbReference type="NCBI Taxonomy" id="167539"/>
    <lineage>
        <taxon>Bacteria</taxon>
        <taxon>Bacillati</taxon>
        <taxon>Cyanobacteriota</taxon>
        <taxon>Cyanophyceae</taxon>
        <taxon>Synechococcales</taxon>
        <taxon>Prochlorococcaceae</taxon>
        <taxon>Prochlorococcus</taxon>
    </lineage>
</organism>
<protein>
    <recommendedName>
        <fullName evidence="1">Imidazole glycerol phosphate synthase subunit HisH</fullName>
        <ecNumber evidence="1">4.3.2.10</ecNumber>
    </recommendedName>
    <alternativeName>
        <fullName evidence="1">IGP synthase glutaminase subunit</fullName>
        <ecNumber evidence="1">3.5.1.2</ecNumber>
    </alternativeName>
    <alternativeName>
        <fullName evidence="1">IGP synthase subunit HisH</fullName>
    </alternativeName>
    <alternativeName>
        <fullName evidence="1">ImGP synthase subunit HisH</fullName>
        <shortName evidence="1">IGPS subunit HisH</shortName>
    </alternativeName>
</protein>
<name>HIS5_PROMA</name>